<proteinExistence type="evidence at protein level"/>
<accession>H2KZM6</accession>
<accession>B2MZB0</accession>
<accession>H2KZM7</accession>
<accession>H2KZM8</accession>
<accession>O76282</accession>
<accession>Q9TZZ1</accession>
<sequence length="1409" mass="159956">MRINRWIWWATVILLYLRTGLAADFFRSSEENDRKSSDDLDNFNSTKIEPDKPKTAKELGVKSCESNQDCVHDGVCHRGNDGHGICMCPRSCPAITPKQCGYNYRTPSTCLLMDADYRSKYDVKEPTCYSRKCVCPPQFDDVHVTANQKPLRLNSTLLPTKCDKRDLAVVARAHPSTSVSKGIDVTLFCCINVDPEGFIDVASVFFIQNGTIMREATSHPFAPRNGLARRVHEKYSCWELEIKNAQTSDSGSYMCRVTASASDLDVTDTMQFEVKAPRQIKNLTVNPSERDAIVTWESEGGEDMAIDLRLVRRTDTRGQVVFSKDNLTSPVSIKDLRAATPYTLFVSGNNGQVPFEFTEHFTTKQKRPFPPKEEDVRVLNSGSALSCEVEWKSPAEPNGRITKYFVSVRGAMRKSDGSLTPDDLPAAVEVDKRCANWDGDENTSKHNGINPIDFANEFYSCKFGPLKPNRNYTVTVWAENSAGRSLPAVFHKNCVTNYAQPDMVETPQPLLSNNHSTFSLTFPQPPDDINGPISCYYIAIVPLPANVSLDILPKSEEIVMHSFSKVFTNNLLPSSAEEKRFFAYIAESYVQLPEETTIGDGVRVSDLKACNVQYLSRYSSEDLALRRGLKYTGFLIVRVDKEEELNRKDVRNGADPNIFRNLIDKSVSPTSRTRTASPMSRHLRQLHLSGPAYGYSAYFKPILLDTESSSSGFGIFMKIILPFLLFLAFATGVTMFFVNRKGHMLSTWCPLFTKMTSKDVVERTLLKQTFGAIPVDDLPTEYVVRHRDTDFLFAQEYESLPHFQLDTVASNRKENAIKNRYNDIRAFDDTRVKLKKINGDDYSDYINANFIKSWKEKKLFIAAQAPVDATIGDFWRMVWEQESYLIVMVANLTEKNRQQCAKYWPDEQITRYGDIIVEPASFSFHSDYAIRAFDIAHIGECGPDVIPNGNGVEYANVPIVKGQFANNSRRILQYHFTNWNDYKAPECSTGLLRFMYRLRELPQFNNSPVVIHCSAGVGRTGTFISIDSMLDQCLAEDKANIFEFVCNLRRQRNLMVQSLEQYVFIYKALAEWHMYGDTDEDVRDFEDHYQRLCASNRDRAVSFNQQSSTNGSISPRVAIVSSRESMTTSNGETGLEEEFKKLERNLTTPLSSNFAAKDENLLKNRYEAAVPFDKYRVILPPTIGHADSSYINASHIKGYFFDYIAAQDPVSEGTAFDFWRMIADQNVTTVVMLSDETDWSDVEKYWPIDGSGTECHFGSERNSVNVTCVSEEHHQDFIIRNLSYSMKDNESMPANQEVVQYSYTGWPSDSIVPKSANSLMNLIEMVLQRQSSLMGSQAPIVVHCRNGSSESGIFICISLLWLRQKAEQRIDVFQTVKGLQSHRPMMFTRFEQYSFCYRALADYISKTYR</sequence>
<reference evidence="15" key="1">
    <citation type="journal article" date="1998" name="Genes Dev.">
        <title>clr-1 encodes a receptor tyrosine phosphatase that negatively regulates an FGF receptor signaling pathway in Caenorhabditis elegans.</title>
        <authorList>
            <person name="Kokel M."/>
            <person name="Borland C.Z."/>
            <person name="DeLong L."/>
            <person name="Horvitz H.R."/>
            <person name="Stern M.J."/>
        </authorList>
    </citation>
    <scope>NUCLEOTIDE SEQUENCE [MRNA] (ISOFORM A)</scope>
    <scope>FUNCTION</scope>
    <scope>CATALYTIC ACTIVITY</scope>
    <scope>SUBCELLULAR LOCATION</scope>
    <scope>TISSUE SPECIFICITY</scope>
    <scope>DOMAIN</scope>
    <scope>DISRUPTION PHENOTYPE</scope>
    <scope>MUTAGENESIS OF ALA-862; PRO-985; CYS-1013; ALA-1015 AND GLY-1021</scope>
    <source>
        <strain evidence="15">Bristol N2</strain>
    </source>
</reference>
<reference evidence="16" key="2">
    <citation type="journal article" date="1998" name="Science">
        <title>Genome sequence of the nematode C. elegans: a platform for investigating biology.</title>
        <authorList>
            <consortium name="The C. elegans sequencing consortium"/>
        </authorList>
    </citation>
    <scope>NUCLEOTIDE SEQUENCE [LARGE SCALE GENOMIC DNA]</scope>
    <source>
        <strain evidence="16">Bristol N2</strain>
    </source>
</reference>
<reference evidence="13" key="3">
    <citation type="journal article" date="2003" name="EMBO J.">
        <title>Activated EGL-15 FGF receptor promotes protein degradation in muscles of Caenorhabditis elegans.</title>
        <authorList>
            <person name="Szewczyk N.J."/>
            <person name="Jacobson L.A."/>
        </authorList>
    </citation>
    <scope>FUNCTION</scope>
</reference>
<reference key="4">
    <citation type="journal article" date="2005" name="EMBO J.">
        <title>Identification and characterization of novel nicotinic receptor-associated proteins in Caenorhabditis elegans.</title>
        <authorList>
            <person name="Gottschalk A."/>
            <person name="Almedom R.B."/>
            <person name="Schedletzky T."/>
            <person name="Anderson S.D."/>
            <person name="Yates J.R. III"/>
            <person name="Schafer W.R."/>
        </authorList>
    </citation>
    <scope>FUNCTION</scope>
</reference>
<reference key="5">
    <citation type="journal article" date="2006" name="Development">
        <title>FGF negatively regulates muscle membrane extension in Caenorhabditis elegans.</title>
        <authorList>
            <person name="Dixon S.J."/>
            <person name="Alexander M."/>
            <person name="Fernandes R."/>
            <person name="Ricker N."/>
            <person name="Roy P.J."/>
        </authorList>
    </citation>
    <scope>FUNCTION</scope>
</reference>
<reference key="6">
    <citation type="journal article" date="2016" name="Dev. Biol.">
        <title>Receptor tyrosine phosphatase CLR-1 acts in skin cells to promote sensory dendrite outgrowth.</title>
        <authorList>
            <person name="Liu X."/>
            <person name="Wang X."/>
            <person name="Shen K."/>
        </authorList>
    </citation>
    <scope>FUNCTION</scope>
    <scope>TISSUE SPECIFICITY</scope>
    <scope>DOMAIN</scope>
    <scope>MUTAGENESIS OF CYS-1013 AND 1072-TRP--ARG-1409</scope>
</reference>
<reference key="7">
    <citation type="journal article" date="2018" name="PLoS Genet.">
        <title>The receptor protein tyrosine phosphatase CLR-1 is required for synaptic partner recognition.</title>
        <authorList>
            <person name="Varshney A."/>
            <person name="Benedetti K."/>
            <person name="Watters K."/>
            <person name="Shankar R."/>
            <person name="Tatarakis D."/>
            <person name="Coto Villa D."/>
            <person name="Magallanes K."/>
            <person name="Agenor V."/>
            <person name="Wung W."/>
            <person name="Farah F."/>
            <person name="Ali N."/>
            <person name="Le N."/>
            <person name="Pyle J."/>
            <person name="Farooqi A."/>
            <person name="Kieu Z."/>
            <person name="Bremer M."/>
            <person name="VanHoven M."/>
        </authorList>
    </citation>
    <scope>FUNCTION</scope>
    <scope>SUBCELLULAR LOCATION</scope>
    <scope>TISSUE SPECIFICITY</scope>
    <scope>DOMAIN</scope>
    <scope>MUTAGENESIS OF CYS-1013 AND 1072-TRP--ARG-1409</scope>
</reference>
<keyword id="KW-0025">Alternative splicing</keyword>
<keyword id="KW-1003">Cell membrane</keyword>
<keyword id="KW-1015">Disulfide bond</keyword>
<keyword id="KW-0378">Hydrolase</keyword>
<keyword id="KW-0393">Immunoglobulin domain</keyword>
<keyword id="KW-0472">Membrane</keyword>
<keyword id="KW-0524">Neurogenesis</keyword>
<keyword id="KW-0904">Protein phosphatase</keyword>
<keyword id="KW-1185">Reference proteome</keyword>
<keyword id="KW-0732">Signal</keyword>
<keyword id="KW-0770">Synapse</keyword>
<keyword id="KW-0812">Transmembrane</keyword>
<keyword id="KW-1133">Transmembrane helix</keyword>
<gene>
    <name evidence="17" type="primary">clr-1</name>
    <name evidence="17" type="ORF">F56D1.4</name>
</gene>
<feature type="signal peptide" evidence="1">
    <location>
        <begin position="1"/>
        <end position="22"/>
    </location>
</feature>
<feature type="chain" id="PRO_0000432382" description="Receptor-type tyrosine-protein phosphatase">
    <location>
        <begin position="23"/>
        <end position="1409"/>
    </location>
</feature>
<feature type="topological domain" description="Extracellular" evidence="1">
    <location>
        <begin position="23"/>
        <end position="712"/>
    </location>
</feature>
<feature type="transmembrane region" description="Helical" evidence="1">
    <location>
        <begin position="713"/>
        <end position="733"/>
    </location>
</feature>
<feature type="topological domain" description="Cytoplasmic" evidence="1">
    <location>
        <begin position="734"/>
        <end position="1409"/>
    </location>
</feature>
<feature type="domain" description="Ig-like C2-type" evidence="2">
    <location>
        <begin position="159"/>
        <end position="267"/>
    </location>
</feature>
<feature type="domain" description="Fibronectin type-III 1" evidence="4">
    <location>
        <begin position="276"/>
        <end position="366"/>
    </location>
</feature>
<feature type="domain" description="Fibronectin type-III 2" evidence="4">
    <location>
        <begin position="372"/>
        <end position="502"/>
    </location>
</feature>
<feature type="domain" description="Tyrosine-protein phosphatase 1" evidence="3">
    <location>
        <begin position="793"/>
        <end position="1072"/>
    </location>
</feature>
<feature type="domain" description="Tyrosine-protein phosphatase 2" evidence="3">
    <location>
        <begin position="1135"/>
        <end position="1403"/>
    </location>
</feature>
<feature type="region of interest" description="Disordered" evidence="5">
    <location>
        <begin position="32"/>
        <end position="53"/>
    </location>
</feature>
<feature type="active site" description="Phosphocysteine intermediate" evidence="3">
    <location>
        <position position="1013"/>
    </location>
</feature>
<feature type="active site" description="Phosphocysteine intermediate" evidence="3">
    <location>
        <position position="1344"/>
    </location>
</feature>
<feature type="disulfide bond" evidence="2">
    <location>
        <begin position="189"/>
        <end position="255"/>
    </location>
</feature>
<feature type="splice variant" id="VSP_057499" description="In isoform d." evidence="13">
    <original>FFRS</original>
    <variation>LS</variation>
    <location>
        <begin position="25"/>
        <end position="28"/>
    </location>
</feature>
<feature type="splice variant" id="VSP_057500" description="In isoform b." evidence="13">
    <original>A</original>
    <variation>EHARRTHSYWYKRPKKVMPPSSSSSLKTSDDDDDST</variation>
    <location>
        <position position="276"/>
    </location>
</feature>
<feature type="mutagenesis site" description="In n1649; slight fluid accumulation in the pseudocoelom." evidence="11">
    <original>A</original>
    <variation>V</variation>
    <location>
        <position position="862"/>
    </location>
</feature>
<feature type="mutagenesis site" description="In n1635; fluid accumulation in the pseudocoelom." evidence="11">
    <original>P</original>
    <variation>S</variation>
    <location>
        <position position="985"/>
    </location>
</feature>
<feature type="mutagenesis site" description="Failure in quaternary dendritic arbor formation of the PVD sensory neurons." evidence="9">
    <original>C</original>
    <variation>G</variation>
    <location>
        <position position="1013"/>
    </location>
</feature>
<feature type="mutagenesis site" description="Loss of activity. Reduced synapse formation between the PHB and AVA neurons and defects in the behavioral avoidance response towards sodium dodecyl sulfate." evidence="10 11">
    <original>C</original>
    <variation>S</variation>
    <location>
        <position position="1013"/>
    </location>
</feature>
<feature type="mutagenesis site" description="In gm30; fluid accumulation in the pseudocoelom, reduced size and loss of both motility and fertility." evidence="11">
    <original>C</original>
    <variation>Y</variation>
    <location>
        <position position="1013"/>
    </location>
</feature>
<feature type="mutagenesis site" description="In n1641; fluid accumulation in the pseudocoelom, reduced size and loss of both motility and fertility." evidence="11">
    <original>A</original>
    <variation>V</variation>
    <location>
        <position position="1015"/>
    </location>
</feature>
<feature type="mutagenesis site" description="In n1660; fluid accumulation in the pseudocoelom, reduced size and loss of both motility and fertility." evidence="11">
    <original>G</original>
    <variation>R</variation>
    <location>
        <position position="1021"/>
    </location>
</feature>
<feature type="mutagenesis site" description="In e1745; temperature sensitive. At the restrictive temperature of 25 degrees Celsius, causes reduction of the numbers and extensions of the quaternary dendritic branches, reduced numbers of menorah and ectopic branches from the primary and secondary dendrites of the PVD sensory neurons. Reduced synapse formation between the PHB and AVA neurons and defects in the behavioral avoidance response towards sodium dodecyl sulfate. Defects in PVD primary branch extensions when associated with sax-7(nj48), dma-1(wy686) or mnr-1(wy758)." evidence="9 10">
    <location>
        <begin position="1072"/>
        <end position="1409"/>
    </location>
</feature>
<feature type="sequence conflict" description="In Ref. 1; AAC27551/AAC27552." evidence="13" ref="1">
    <original>A</original>
    <variation>V</variation>
    <location>
        <position position="586"/>
    </location>
</feature>
<dbReference type="EC" id="3.1.3.48" evidence="11"/>
<dbReference type="EMBL" id="AF047880">
    <property type="protein sequence ID" value="AAC27551.1"/>
    <property type="molecule type" value="mRNA"/>
</dbReference>
<dbReference type="EMBL" id="AF047881">
    <property type="protein sequence ID" value="AAC27552.1"/>
    <property type="molecule type" value="mRNA"/>
</dbReference>
<dbReference type="EMBL" id="FO081078">
    <property type="protein sequence ID" value="CCD68957.1"/>
    <property type="molecule type" value="Genomic_DNA"/>
</dbReference>
<dbReference type="EMBL" id="FO081078">
    <property type="protein sequence ID" value="CCD68958.1"/>
    <property type="molecule type" value="Genomic_DNA"/>
</dbReference>
<dbReference type="EMBL" id="FO081078">
    <property type="protein sequence ID" value="CCD68959.1"/>
    <property type="molecule type" value="Genomic_DNA"/>
</dbReference>
<dbReference type="EMBL" id="FO081078">
    <property type="protein sequence ID" value="CCD68963.1"/>
    <property type="molecule type" value="Genomic_DNA"/>
</dbReference>
<dbReference type="PIR" id="T42522">
    <property type="entry name" value="T42522"/>
</dbReference>
<dbReference type="RefSeq" id="NP_001022208.1">
    <molecule id="H2KZM6-1"/>
    <property type="nucleotide sequence ID" value="NM_001027037.4"/>
</dbReference>
<dbReference type="RefSeq" id="NP_001022209.1">
    <molecule id="H2KZM6-2"/>
    <property type="nucleotide sequence ID" value="NM_001027038.3"/>
</dbReference>
<dbReference type="RefSeq" id="NP_001129817.1">
    <molecule id="H2KZM6-4"/>
    <property type="nucleotide sequence ID" value="NM_001136345.4"/>
</dbReference>
<dbReference type="SMR" id="H2KZM6"/>
<dbReference type="FunCoup" id="H2KZM6">
    <property type="interactions" value="248"/>
</dbReference>
<dbReference type="STRING" id="6239.F56D1.4b.1"/>
<dbReference type="PaxDb" id="6239-F56D1.4b"/>
<dbReference type="PeptideAtlas" id="H2KZM6"/>
<dbReference type="EnsemblMetazoa" id="F56D1.4a.1">
    <molecule id="H2KZM6-1"/>
    <property type="protein sequence ID" value="F56D1.4a.1"/>
    <property type="gene ID" value="WBGene00000548"/>
</dbReference>
<dbReference type="EnsemblMetazoa" id="F56D1.4b.1">
    <molecule id="H2KZM6-2"/>
    <property type="protein sequence ID" value="F56D1.4b.1"/>
    <property type="gene ID" value="WBGene00000548"/>
</dbReference>
<dbReference type="EnsemblMetazoa" id="F56D1.4d.1">
    <molecule id="H2KZM6-4"/>
    <property type="protein sequence ID" value="F56D1.4d.1"/>
    <property type="gene ID" value="WBGene00000548"/>
</dbReference>
<dbReference type="GeneID" id="3565419"/>
<dbReference type="KEGG" id="cel:CELE_F56D1.4"/>
<dbReference type="UCSC" id="F56D1.4a">
    <property type="organism name" value="c. elegans"/>
</dbReference>
<dbReference type="AGR" id="WB:WBGene00000548"/>
<dbReference type="CTD" id="3565419"/>
<dbReference type="WormBase" id="F56D1.4a">
    <molecule id="H2KZM6-1"/>
    <property type="protein sequence ID" value="CE32051"/>
    <property type="gene ID" value="WBGene00000548"/>
    <property type="gene designation" value="clr-1"/>
</dbReference>
<dbReference type="WormBase" id="F56D1.4b">
    <molecule id="H2KZM6-2"/>
    <property type="protein sequence ID" value="CE32052"/>
    <property type="gene ID" value="WBGene00000548"/>
    <property type="gene designation" value="clr-1"/>
</dbReference>
<dbReference type="WormBase" id="F56D1.4d">
    <molecule id="H2KZM6-4"/>
    <property type="protein sequence ID" value="CE26369"/>
    <property type="gene ID" value="WBGene00000548"/>
    <property type="gene designation" value="clr-1"/>
</dbReference>
<dbReference type="eggNOG" id="KOG4228">
    <property type="taxonomic scope" value="Eukaryota"/>
</dbReference>
<dbReference type="GeneTree" id="ENSGT00940000174163"/>
<dbReference type="InParanoid" id="H2KZM6"/>
<dbReference type="OMA" id="EKNRQQC"/>
<dbReference type="OrthoDB" id="6058203at2759"/>
<dbReference type="SignaLink" id="H2KZM6"/>
<dbReference type="PRO" id="PR:H2KZM6"/>
<dbReference type="Proteomes" id="UP000001940">
    <property type="component" value="Chromosome II"/>
</dbReference>
<dbReference type="Bgee" id="WBGene00000548">
    <property type="expression patterns" value="Expressed in pharyngeal muscle cell (C elegans) and 4 other cell types or tissues"/>
</dbReference>
<dbReference type="ExpressionAtlas" id="H2KZM6">
    <property type="expression patterns" value="baseline and differential"/>
</dbReference>
<dbReference type="GO" id="GO:0005886">
    <property type="term" value="C:plasma membrane"/>
    <property type="evidence" value="ECO:0000314"/>
    <property type="project" value="WormBase"/>
</dbReference>
<dbReference type="GO" id="GO:0098794">
    <property type="term" value="C:postsynapse"/>
    <property type="evidence" value="ECO:0000314"/>
    <property type="project" value="UniProtKB"/>
</dbReference>
<dbReference type="GO" id="GO:0004725">
    <property type="term" value="F:protein tyrosine phosphatase activity"/>
    <property type="evidence" value="ECO:0000318"/>
    <property type="project" value="GO_Central"/>
</dbReference>
<dbReference type="GO" id="GO:0005001">
    <property type="term" value="F:transmembrane receptor protein tyrosine phosphatase activity"/>
    <property type="evidence" value="ECO:0000314"/>
    <property type="project" value="WormBase"/>
</dbReference>
<dbReference type="GO" id="GO:0007635">
    <property type="term" value="P:chemosensory behavior"/>
    <property type="evidence" value="ECO:0000315"/>
    <property type="project" value="UniProtKB"/>
</dbReference>
<dbReference type="GO" id="GO:0040037">
    <property type="term" value="P:negative regulation of fibroblast growth factor receptor signaling pathway"/>
    <property type="evidence" value="ECO:0000316"/>
    <property type="project" value="WormBase"/>
</dbReference>
<dbReference type="GO" id="GO:0038007">
    <property type="term" value="P:netrin-activated signaling pathway"/>
    <property type="evidence" value="ECO:0000316"/>
    <property type="project" value="UniProtKB"/>
</dbReference>
<dbReference type="GO" id="GO:0031175">
    <property type="term" value="P:neuron projection development"/>
    <property type="evidence" value="ECO:0000318"/>
    <property type="project" value="GO_Central"/>
</dbReference>
<dbReference type="GO" id="GO:0051965">
    <property type="term" value="P:positive regulation of synapse assembly"/>
    <property type="evidence" value="ECO:0000315"/>
    <property type="project" value="UniProtKB"/>
</dbReference>
<dbReference type="GO" id="GO:0007606">
    <property type="term" value="P:sensory perception of chemical stimulus"/>
    <property type="evidence" value="ECO:0000315"/>
    <property type="project" value="UniProtKB"/>
</dbReference>
<dbReference type="GO" id="GO:0007165">
    <property type="term" value="P:signal transduction"/>
    <property type="evidence" value="ECO:0000318"/>
    <property type="project" value="GO_Central"/>
</dbReference>
<dbReference type="GO" id="GO:0099536">
    <property type="term" value="P:synaptic signaling"/>
    <property type="evidence" value="ECO:0000315"/>
    <property type="project" value="UniProtKB"/>
</dbReference>
<dbReference type="CDD" id="cd00063">
    <property type="entry name" value="FN3"/>
    <property type="match status" value="1"/>
</dbReference>
<dbReference type="CDD" id="cd00047">
    <property type="entry name" value="PTPc"/>
    <property type="match status" value="2"/>
</dbReference>
<dbReference type="FunFam" id="3.90.190.10:FF:000102">
    <property type="entry name" value="Receptor-type tyrosine-protein phosphatase"/>
    <property type="match status" value="1"/>
</dbReference>
<dbReference type="FunFam" id="3.90.190.10:FF:000092">
    <property type="entry name" value="Tyrosine-protein phosphatase 69D"/>
    <property type="match status" value="1"/>
</dbReference>
<dbReference type="Gene3D" id="2.60.40.10">
    <property type="entry name" value="Immunoglobulins"/>
    <property type="match status" value="2"/>
</dbReference>
<dbReference type="Gene3D" id="3.90.190.10">
    <property type="entry name" value="Protein tyrosine phosphatase superfamily"/>
    <property type="match status" value="2"/>
</dbReference>
<dbReference type="InterPro" id="IPR003961">
    <property type="entry name" value="FN3_dom"/>
</dbReference>
<dbReference type="InterPro" id="IPR036116">
    <property type="entry name" value="FN3_sf"/>
</dbReference>
<dbReference type="InterPro" id="IPR007110">
    <property type="entry name" value="Ig-like_dom"/>
</dbReference>
<dbReference type="InterPro" id="IPR036179">
    <property type="entry name" value="Ig-like_dom_sf"/>
</dbReference>
<dbReference type="InterPro" id="IPR013783">
    <property type="entry name" value="Ig-like_fold"/>
</dbReference>
<dbReference type="InterPro" id="IPR003599">
    <property type="entry name" value="Ig_sub"/>
</dbReference>
<dbReference type="InterPro" id="IPR029021">
    <property type="entry name" value="Prot-tyrosine_phosphatase-like"/>
</dbReference>
<dbReference type="InterPro" id="IPR050348">
    <property type="entry name" value="Protein-Tyr_Phosphatase"/>
</dbReference>
<dbReference type="InterPro" id="IPR000242">
    <property type="entry name" value="PTP_cat"/>
</dbReference>
<dbReference type="InterPro" id="IPR016130">
    <property type="entry name" value="Tyr_Pase_AS"/>
</dbReference>
<dbReference type="InterPro" id="IPR003595">
    <property type="entry name" value="Tyr_Pase_cat"/>
</dbReference>
<dbReference type="InterPro" id="IPR000387">
    <property type="entry name" value="Tyr_Pase_dom"/>
</dbReference>
<dbReference type="PANTHER" id="PTHR19134">
    <property type="entry name" value="RECEPTOR-TYPE TYROSINE-PROTEIN PHOSPHATASE"/>
    <property type="match status" value="1"/>
</dbReference>
<dbReference type="PANTHER" id="PTHR19134:SF495">
    <property type="entry name" value="TYROSINE-PROTEIN PHOSPHATASE 69D"/>
    <property type="match status" value="1"/>
</dbReference>
<dbReference type="Pfam" id="PF00041">
    <property type="entry name" value="fn3"/>
    <property type="match status" value="1"/>
</dbReference>
<dbReference type="Pfam" id="PF00102">
    <property type="entry name" value="Y_phosphatase"/>
    <property type="match status" value="2"/>
</dbReference>
<dbReference type="PRINTS" id="PR00700">
    <property type="entry name" value="PRTYPHPHTASE"/>
</dbReference>
<dbReference type="SMART" id="SM00060">
    <property type="entry name" value="FN3"/>
    <property type="match status" value="2"/>
</dbReference>
<dbReference type="SMART" id="SM00409">
    <property type="entry name" value="IG"/>
    <property type="match status" value="1"/>
</dbReference>
<dbReference type="SMART" id="SM00194">
    <property type="entry name" value="PTPc"/>
    <property type="match status" value="2"/>
</dbReference>
<dbReference type="SMART" id="SM00404">
    <property type="entry name" value="PTPc_motif"/>
    <property type="match status" value="2"/>
</dbReference>
<dbReference type="SUPFAM" id="SSF52799">
    <property type="entry name" value="(Phosphotyrosine protein) phosphatases II"/>
    <property type="match status" value="2"/>
</dbReference>
<dbReference type="SUPFAM" id="SSF49265">
    <property type="entry name" value="Fibronectin type III"/>
    <property type="match status" value="1"/>
</dbReference>
<dbReference type="SUPFAM" id="SSF48726">
    <property type="entry name" value="Immunoglobulin"/>
    <property type="match status" value="1"/>
</dbReference>
<dbReference type="PROSITE" id="PS50853">
    <property type="entry name" value="FN3"/>
    <property type="match status" value="2"/>
</dbReference>
<dbReference type="PROSITE" id="PS50835">
    <property type="entry name" value="IG_LIKE"/>
    <property type="match status" value="1"/>
</dbReference>
<dbReference type="PROSITE" id="PS00383">
    <property type="entry name" value="TYR_PHOSPHATASE_1"/>
    <property type="match status" value="1"/>
</dbReference>
<dbReference type="PROSITE" id="PS50056">
    <property type="entry name" value="TYR_PHOSPHATASE_2"/>
    <property type="match status" value="2"/>
</dbReference>
<dbReference type="PROSITE" id="PS50055">
    <property type="entry name" value="TYR_PHOSPHATASE_PTP"/>
    <property type="match status" value="2"/>
</dbReference>
<name>PTPR_CAEEL</name>
<protein>
    <recommendedName>
        <fullName evidence="12">Receptor-type tyrosine-protein phosphatase</fullName>
        <ecNumber evidence="11">3.1.3.48</ecNumber>
    </recommendedName>
</protein>
<comment type="function">
    <text evidence="6 7 8 9 10 11">Possesses an intrinsic protein tyrosine phosphatase (PTPase) activity (PubMed:9585503). Regulates egl-15 activity which is required for hypodermis-mediated fluid homeostasis and protein degradation in muscle (PubMed:9585503). During the formation of neuromuscular junctions at the larval stage, negatively regulates membrane protrusion from body wall muscles (PubMed:16495308). Plays a role in nicotinic acetylcholine receptor (nAChR)-mediated sensitivity to nicotine (PubMed:15990870). Regulates synaptic levels of nAchR subunit lev-1 in the nerve cord (PubMed:15990870). Promotes the outgrowth of the quaternary dendritic branches of the PVD sensory neurons (PubMed:26968353). In parallel to the sax-7/mnr-1 pathway, also controls the extension of the PVD primary branches (PubMed:26968353). Acts in the netrin/DCC pathway to mediate the formation of synapses between the AVA interneurons and the PHB sensory neurons (PubMed:29742100). Also required for the formation of synapses between the AVA interneurons and the VA10 motor neurons (PubMed:29742100).</text>
</comment>
<comment type="catalytic activity">
    <reaction evidence="11">
        <text>O-phospho-L-tyrosyl-[protein] + H2O = L-tyrosyl-[protein] + phosphate</text>
        <dbReference type="Rhea" id="RHEA:10684"/>
        <dbReference type="Rhea" id="RHEA-COMP:10136"/>
        <dbReference type="Rhea" id="RHEA-COMP:20101"/>
        <dbReference type="ChEBI" id="CHEBI:15377"/>
        <dbReference type="ChEBI" id="CHEBI:43474"/>
        <dbReference type="ChEBI" id="CHEBI:46858"/>
        <dbReference type="ChEBI" id="CHEBI:61978"/>
        <dbReference type="EC" id="3.1.3.48"/>
    </reaction>
</comment>
<comment type="subcellular location">
    <subcellularLocation>
        <location evidence="14">Cell membrane</location>
        <topology evidence="1">Single-pass membrane protein</topology>
    </subcellularLocation>
    <subcellularLocation>
        <location evidence="10">Synapse</location>
    </subcellularLocation>
</comment>
<comment type="alternative products">
    <event type="alternative splicing"/>
    <isoform>
        <id>H2KZM6-1</id>
        <name>a</name>
        <name evidence="12">CLR-1 RTP1</name>
        <sequence type="displayed"/>
    </isoform>
    <isoform>
        <id>H2KZM6-2</id>
        <name evidence="18">b</name>
        <sequence type="described" ref="VSP_057500"/>
    </isoform>
    <isoform>
        <id>H2KZM6-4</id>
        <name evidence="19">d</name>
        <sequence type="described" ref="VSP_057499"/>
    </isoform>
</comment>
<comment type="tissue specificity">
    <text evidence="9 10 11">Expressed in muscles, hypodermis and a subset of neurons (PubMed:26968353, PubMed:9585503). Expressed in the AVA neurons, with high expression in the anterior half of the preanal ganglion where AVA neurons contact the PHB neurons (PubMed:29742100).</text>
</comment>
<comment type="domain">
    <text evidence="9 11">Tyrosine-protein phosphatase 1 domain has enzymatic activity which is required for the negative regulation of egl-15 (PubMed:9585503). Tyrosine-protein phosphatase 1 domain is required for correct PVD dendrite formation (PubMed:26968353). The second tyrosine-protein phosphatase domain has no phosphatase activity and appears to be dispensable for clr-1 function (PubMed:9585503). Isoform c lacks both tyrosine-protein phosphatase domains and is likely to have no catalytic activity (PubMed:9585503).</text>
</comment>
<comment type="domain">
    <text evidence="10">The extracellular domain is required for the formation of synapses between the AVA interneurons and the PHB sensory neurons.</text>
</comment>
<comment type="disruption phenotype">
    <text evidence="11">Mutants have a reduced size and a loss of both motility and fertility. In addition the pharynx and the intestine appear to float within the pseudocoelom resulting from the accumulation of fluid. The majority die during larval development with hypodermal ruptures. Simultaneous knockdown of clr-1 and egl-15 rescues the thin body morphology of egl-15 mutants.</text>
</comment>
<comment type="similarity">
    <text evidence="13">Belongs to the protein-tyrosine phosphatase family. Receptor class 2A subfamily.</text>
</comment>
<organism evidence="16">
    <name type="scientific">Caenorhabditis elegans</name>
    <dbReference type="NCBI Taxonomy" id="6239"/>
    <lineage>
        <taxon>Eukaryota</taxon>
        <taxon>Metazoa</taxon>
        <taxon>Ecdysozoa</taxon>
        <taxon>Nematoda</taxon>
        <taxon>Chromadorea</taxon>
        <taxon>Rhabditida</taxon>
        <taxon>Rhabditina</taxon>
        <taxon>Rhabditomorpha</taxon>
        <taxon>Rhabditoidea</taxon>
        <taxon>Rhabditidae</taxon>
        <taxon>Peloderinae</taxon>
        <taxon>Caenorhabditis</taxon>
    </lineage>
</organism>
<evidence type="ECO:0000255" key="1"/>
<evidence type="ECO:0000255" key="2">
    <source>
        <dbReference type="PROSITE-ProRule" id="PRU00114"/>
    </source>
</evidence>
<evidence type="ECO:0000255" key="3">
    <source>
        <dbReference type="PROSITE-ProRule" id="PRU00160"/>
    </source>
</evidence>
<evidence type="ECO:0000255" key="4">
    <source>
        <dbReference type="PROSITE-ProRule" id="PRU00316"/>
    </source>
</evidence>
<evidence type="ECO:0000256" key="5">
    <source>
        <dbReference type="SAM" id="MobiDB-lite"/>
    </source>
</evidence>
<evidence type="ECO:0000269" key="6">
    <source>
    </source>
</evidence>
<evidence type="ECO:0000269" key="7">
    <source>
    </source>
</evidence>
<evidence type="ECO:0000269" key="8">
    <source>
    </source>
</evidence>
<evidence type="ECO:0000269" key="9">
    <source>
    </source>
</evidence>
<evidence type="ECO:0000269" key="10">
    <source>
    </source>
</evidence>
<evidence type="ECO:0000269" key="11">
    <source>
    </source>
</evidence>
<evidence type="ECO:0000303" key="12">
    <source>
    </source>
</evidence>
<evidence type="ECO:0000305" key="13"/>
<evidence type="ECO:0000305" key="14">
    <source>
    </source>
</evidence>
<evidence type="ECO:0000312" key="15">
    <source>
        <dbReference type="EMBL" id="AAC27551.1"/>
    </source>
</evidence>
<evidence type="ECO:0000312" key="16">
    <source>
        <dbReference type="Proteomes" id="UP000001940"/>
    </source>
</evidence>
<evidence type="ECO:0000312" key="17">
    <source>
        <dbReference type="WormBase" id="F56D1.4a"/>
    </source>
</evidence>
<evidence type="ECO:0000312" key="18">
    <source>
        <dbReference type="WormBase" id="F56D1.4b"/>
    </source>
</evidence>
<evidence type="ECO:0000312" key="19">
    <source>
        <dbReference type="WormBase" id="F56D1.4d"/>
    </source>
</evidence>